<accession>B4EZU5</accession>
<name>HSCB_PROMH</name>
<reference key="1">
    <citation type="journal article" date="2008" name="J. Bacteriol.">
        <title>Complete genome sequence of uropathogenic Proteus mirabilis, a master of both adherence and motility.</title>
        <authorList>
            <person name="Pearson M.M."/>
            <person name="Sebaihia M."/>
            <person name="Churcher C."/>
            <person name="Quail M.A."/>
            <person name="Seshasayee A.S."/>
            <person name="Luscombe N.M."/>
            <person name="Abdellah Z."/>
            <person name="Arrosmith C."/>
            <person name="Atkin B."/>
            <person name="Chillingworth T."/>
            <person name="Hauser H."/>
            <person name="Jagels K."/>
            <person name="Moule S."/>
            <person name="Mungall K."/>
            <person name="Norbertczak H."/>
            <person name="Rabbinowitsch E."/>
            <person name="Walker D."/>
            <person name="Whithead S."/>
            <person name="Thomson N.R."/>
            <person name="Rather P.N."/>
            <person name="Parkhill J."/>
            <person name="Mobley H.L.T."/>
        </authorList>
    </citation>
    <scope>NUCLEOTIDE SEQUENCE [LARGE SCALE GENOMIC DNA]</scope>
    <source>
        <strain>HI4320</strain>
    </source>
</reference>
<keyword id="KW-0143">Chaperone</keyword>
<keyword id="KW-1185">Reference proteome</keyword>
<protein>
    <recommendedName>
        <fullName evidence="1">Co-chaperone protein HscB</fullName>
    </recommendedName>
    <alternativeName>
        <fullName evidence="1">Hsc20</fullName>
    </alternativeName>
</protein>
<feature type="chain" id="PRO_1000131743" description="Co-chaperone protein HscB">
    <location>
        <begin position="1"/>
        <end position="173"/>
    </location>
</feature>
<feature type="domain" description="J" evidence="1">
    <location>
        <begin position="2"/>
        <end position="74"/>
    </location>
</feature>
<gene>
    <name evidence="1" type="primary">hscB</name>
    <name type="ordered locus">PMI1857</name>
</gene>
<organism>
    <name type="scientific">Proteus mirabilis (strain HI4320)</name>
    <dbReference type="NCBI Taxonomy" id="529507"/>
    <lineage>
        <taxon>Bacteria</taxon>
        <taxon>Pseudomonadati</taxon>
        <taxon>Pseudomonadota</taxon>
        <taxon>Gammaproteobacteria</taxon>
        <taxon>Enterobacterales</taxon>
        <taxon>Morganellaceae</taxon>
        <taxon>Proteus</taxon>
    </lineage>
</organism>
<proteinExistence type="inferred from homology"/>
<dbReference type="EMBL" id="AM942759">
    <property type="protein sequence ID" value="CAR43850.1"/>
    <property type="molecule type" value="Genomic_DNA"/>
</dbReference>
<dbReference type="RefSeq" id="WP_004243844.1">
    <property type="nucleotide sequence ID" value="NC_010554.1"/>
</dbReference>
<dbReference type="SMR" id="B4EZU5"/>
<dbReference type="EnsemblBacteria" id="CAR43850">
    <property type="protein sequence ID" value="CAR43850"/>
    <property type="gene ID" value="PMI1857"/>
</dbReference>
<dbReference type="GeneID" id="6800238"/>
<dbReference type="KEGG" id="pmr:PMI1857"/>
<dbReference type="eggNOG" id="COG1076">
    <property type="taxonomic scope" value="Bacteria"/>
</dbReference>
<dbReference type="HOGENOM" id="CLU_068529_2_0_6"/>
<dbReference type="Proteomes" id="UP000008319">
    <property type="component" value="Chromosome"/>
</dbReference>
<dbReference type="GO" id="GO:1990230">
    <property type="term" value="C:iron-sulfur cluster transfer complex"/>
    <property type="evidence" value="ECO:0007669"/>
    <property type="project" value="TreeGrafter"/>
</dbReference>
<dbReference type="GO" id="GO:0001671">
    <property type="term" value="F:ATPase activator activity"/>
    <property type="evidence" value="ECO:0007669"/>
    <property type="project" value="InterPro"/>
</dbReference>
<dbReference type="GO" id="GO:0051087">
    <property type="term" value="F:protein-folding chaperone binding"/>
    <property type="evidence" value="ECO:0007669"/>
    <property type="project" value="InterPro"/>
</dbReference>
<dbReference type="GO" id="GO:0044571">
    <property type="term" value="P:[2Fe-2S] cluster assembly"/>
    <property type="evidence" value="ECO:0007669"/>
    <property type="project" value="InterPro"/>
</dbReference>
<dbReference type="GO" id="GO:0051259">
    <property type="term" value="P:protein complex oligomerization"/>
    <property type="evidence" value="ECO:0007669"/>
    <property type="project" value="InterPro"/>
</dbReference>
<dbReference type="GO" id="GO:0006457">
    <property type="term" value="P:protein folding"/>
    <property type="evidence" value="ECO:0007669"/>
    <property type="project" value="UniProtKB-UniRule"/>
</dbReference>
<dbReference type="CDD" id="cd06257">
    <property type="entry name" value="DnaJ"/>
    <property type="match status" value="1"/>
</dbReference>
<dbReference type="Gene3D" id="1.10.287.110">
    <property type="entry name" value="DnaJ domain"/>
    <property type="match status" value="1"/>
</dbReference>
<dbReference type="Gene3D" id="1.20.1280.20">
    <property type="entry name" value="HscB, C-terminal domain"/>
    <property type="match status" value="1"/>
</dbReference>
<dbReference type="HAMAP" id="MF_00682">
    <property type="entry name" value="HscB"/>
    <property type="match status" value="1"/>
</dbReference>
<dbReference type="InterPro" id="IPR001623">
    <property type="entry name" value="DnaJ_domain"/>
</dbReference>
<dbReference type="InterPro" id="IPR004640">
    <property type="entry name" value="HscB"/>
</dbReference>
<dbReference type="InterPro" id="IPR036386">
    <property type="entry name" value="HscB_C_sf"/>
</dbReference>
<dbReference type="InterPro" id="IPR009073">
    <property type="entry name" value="HscB_oligo_C"/>
</dbReference>
<dbReference type="InterPro" id="IPR036869">
    <property type="entry name" value="J_dom_sf"/>
</dbReference>
<dbReference type="NCBIfam" id="TIGR00714">
    <property type="entry name" value="hscB"/>
    <property type="match status" value="1"/>
</dbReference>
<dbReference type="NCBIfam" id="NF003449">
    <property type="entry name" value="PRK05014.1"/>
    <property type="match status" value="1"/>
</dbReference>
<dbReference type="PANTHER" id="PTHR14021">
    <property type="entry name" value="IRON-SULFUR CLUSTER CO-CHAPERONE PROTEIN HSCB"/>
    <property type="match status" value="1"/>
</dbReference>
<dbReference type="PANTHER" id="PTHR14021:SF15">
    <property type="entry name" value="IRON-SULFUR CLUSTER CO-CHAPERONE PROTEIN HSCB"/>
    <property type="match status" value="1"/>
</dbReference>
<dbReference type="Pfam" id="PF00226">
    <property type="entry name" value="DnaJ"/>
    <property type="match status" value="1"/>
</dbReference>
<dbReference type="Pfam" id="PF07743">
    <property type="entry name" value="HSCB_C"/>
    <property type="match status" value="1"/>
</dbReference>
<dbReference type="SMART" id="SM00271">
    <property type="entry name" value="DnaJ"/>
    <property type="match status" value="1"/>
</dbReference>
<dbReference type="SUPFAM" id="SSF46565">
    <property type="entry name" value="Chaperone J-domain"/>
    <property type="match status" value="1"/>
</dbReference>
<dbReference type="SUPFAM" id="SSF47144">
    <property type="entry name" value="HSC20 (HSCB), C-terminal oligomerisation domain"/>
    <property type="match status" value="1"/>
</dbReference>
<dbReference type="PROSITE" id="PS50076">
    <property type="entry name" value="DNAJ_2"/>
    <property type="match status" value="1"/>
</dbReference>
<sequence>MDYFTLLGMPNRFDIDKQQLASRYQEMQRQYHPDRFAGKSDKEQVQAISFASTINQAYQTLKNPLSRAEYMLSLQGIDIANEQQTMHDTAFLMEQLTLREELDDIEHSTDAENLLADFSARLEKMYTVRYDEMVKTLDSQTWDIAADNVRKLRFLAKLKEQVEHLEERLFDGF</sequence>
<comment type="function">
    <text evidence="1">Co-chaperone involved in the maturation of iron-sulfur cluster-containing proteins. Seems to help targeting proteins to be folded toward HscA.</text>
</comment>
<comment type="subunit">
    <text evidence="1">Interacts with HscA and stimulates its ATPase activity. Interacts with IscU.</text>
</comment>
<comment type="similarity">
    <text evidence="1">Belongs to the HscB family.</text>
</comment>
<evidence type="ECO:0000255" key="1">
    <source>
        <dbReference type="HAMAP-Rule" id="MF_00682"/>
    </source>
</evidence>